<protein>
    <recommendedName>
        <fullName evidence="2">Large ribosomal subunit protein uL22c</fullName>
    </recommendedName>
    <alternativeName>
        <fullName>50S ribosomal protein L22, chloroplastic</fullName>
    </alternativeName>
</protein>
<name>RK22_GRATE</name>
<sequence length="114" mass="13107">MTNKTTKIQATGKYVRLSTAKTRRVLNQIKGKKYQEAILILEFMTYKPCKIIKKILESAGNNALNLKYEKQNLIIKQAFANDGPKLKRFQPRAQGRAFRIQKPTCHITINLSIN</sequence>
<comment type="function">
    <text evidence="1">This protein binds specifically to 23S rRNA.</text>
</comment>
<comment type="function">
    <text evidence="1">The globular domain of the protein is located near the polypeptide exit tunnel on the outside of the subunit, while an extended beta-hairpin is found that lines the wall of the exit tunnel in the center of the 70S ribosome.</text>
</comment>
<comment type="subunit">
    <text>Part of the 50S ribosomal subunit.</text>
</comment>
<comment type="subcellular location">
    <subcellularLocation>
        <location>Plastid</location>
        <location>Chloroplast</location>
    </subcellularLocation>
</comment>
<comment type="similarity">
    <text evidence="2">Belongs to the universal ribosomal protein uL22 family.</text>
</comment>
<keyword id="KW-0150">Chloroplast</keyword>
<keyword id="KW-0934">Plastid</keyword>
<keyword id="KW-0687">Ribonucleoprotein</keyword>
<keyword id="KW-0689">Ribosomal protein</keyword>
<keyword id="KW-0694">RNA-binding</keyword>
<keyword id="KW-0699">rRNA-binding</keyword>
<accession>P16634</accession>
<dbReference type="EMBL" id="M32638">
    <property type="protein sequence ID" value="AAA84291.1"/>
    <property type="molecule type" value="Genomic_DNA"/>
</dbReference>
<dbReference type="PIR" id="S12811">
    <property type="entry name" value="R5KK22"/>
</dbReference>
<dbReference type="SMR" id="P16634"/>
<dbReference type="GO" id="GO:0009507">
    <property type="term" value="C:chloroplast"/>
    <property type="evidence" value="ECO:0007669"/>
    <property type="project" value="UniProtKB-SubCell"/>
</dbReference>
<dbReference type="GO" id="GO:0015934">
    <property type="term" value="C:large ribosomal subunit"/>
    <property type="evidence" value="ECO:0007669"/>
    <property type="project" value="InterPro"/>
</dbReference>
<dbReference type="GO" id="GO:0019843">
    <property type="term" value="F:rRNA binding"/>
    <property type="evidence" value="ECO:0007669"/>
    <property type="project" value="UniProtKB-UniRule"/>
</dbReference>
<dbReference type="GO" id="GO:0003735">
    <property type="term" value="F:structural constituent of ribosome"/>
    <property type="evidence" value="ECO:0007669"/>
    <property type="project" value="InterPro"/>
</dbReference>
<dbReference type="GO" id="GO:0006412">
    <property type="term" value="P:translation"/>
    <property type="evidence" value="ECO:0007669"/>
    <property type="project" value="UniProtKB-UniRule"/>
</dbReference>
<dbReference type="CDD" id="cd00336">
    <property type="entry name" value="Ribosomal_L22"/>
    <property type="match status" value="1"/>
</dbReference>
<dbReference type="Gene3D" id="3.90.470.10">
    <property type="entry name" value="Ribosomal protein L22/L17"/>
    <property type="match status" value="1"/>
</dbReference>
<dbReference type="HAMAP" id="MF_01331_B">
    <property type="entry name" value="Ribosomal_uL22_B"/>
    <property type="match status" value="1"/>
</dbReference>
<dbReference type="InterPro" id="IPR001063">
    <property type="entry name" value="Ribosomal_uL22"/>
</dbReference>
<dbReference type="InterPro" id="IPR005727">
    <property type="entry name" value="Ribosomal_uL22_bac/chlpt-type"/>
</dbReference>
<dbReference type="InterPro" id="IPR047867">
    <property type="entry name" value="Ribosomal_uL22_bac/org-type"/>
</dbReference>
<dbReference type="InterPro" id="IPR018260">
    <property type="entry name" value="Ribosomal_uL22_CS"/>
</dbReference>
<dbReference type="InterPro" id="IPR036394">
    <property type="entry name" value="Ribosomal_uL22_sf"/>
</dbReference>
<dbReference type="NCBIfam" id="TIGR01044">
    <property type="entry name" value="rplV_bact"/>
    <property type="match status" value="1"/>
</dbReference>
<dbReference type="PANTHER" id="PTHR13501">
    <property type="entry name" value="CHLOROPLAST 50S RIBOSOMAL PROTEIN L22-RELATED"/>
    <property type="match status" value="1"/>
</dbReference>
<dbReference type="PANTHER" id="PTHR13501:SF8">
    <property type="entry name" value="LARGE RIBOSOMAL SUBUNIT PROTEIN UL22M"/>
    <property type="match status" value="1"/>
</dbReference>
<dbReference type="Pfam" id="PF00237">
    <property type="entry name" value="Ribosomal_L22"/>
    <property type="match status" value="1"/>
</dbReference>
<dbReference type="SUPFAM" id="SSF54843">
    <property type="entry name" value="Ribosomal protein L22"/>
    <property type="match status" value="1"/>
</dbReference>
<dbReference type="PROSITE" id="PS00464">
    <property type="entry name" value="RIBOSOMAL_L22"/>
    <property type="match status" value="1"/>
</dbReference>
<feature type="chain" id="PRO_0000125304" description="Large ribosomal subunit protein uL22c">
    <location>
        <begin position="1"/>
        <end position="114"/>
    </location>
</feature>
<evidence type="ECO:0000250" key="1"/>
<evidence type="ECO:0000305" key="2"/>
<proteinExistence type="inferred from homology"/>
<geneLocation type="chloroplast"/>
<gene>
    <name type="primary">rpl22</name>
</gene>
<organism>
    <name type="scientific">Gracilaria tenuistipitata</name>
    <name type="common">Red alga</name>
    <name type="synonym">Agarophyton tenuistipitatum</name>
    <dbReference type="NCBI Taxonomy" id="2510778"/>
    <lineage>
        <taxon>Eukaryota</taxon>
        <taxon>Rhodophyta</taxon>
        <taxon>Florideophyceae</taxon>
        <taxon>Rhodymeniophycidae</taxon>
        <taxon>Gracilariales</taxon>
        <taxon>Gracilariaceae</taxon>
        <taxon>Gracilaria</taxon>
    </lineage>
</organism>
<reference key="1">
    <citation type="journal article" date="1990" name="Gene">
        <title>Cloning and characterization of chloroplast ribosomal protein-encoding genes, rpl16 and rps3, of the marine macro-algae, Gracilaria tenuistipitata.</title>
        <authorList>
            <person name="Kao J.-S."/>
            <person name="Wu M."/>
            <person name="Chiang Y.-M."/>
        </authorList>
    </citation>
    <scope>NUCLEOTIDE SEQUENCE [GENOMIC DNA]</scope>
</reference>
<reference key="2">
    <citation type="journal article" date="1990" name="Nucleic Acids Res.">
        <title>The sequence of the plastid encoded rpl22 protein in marine macroalgae, Gracilaria tenuistipitata.</title>
        <authorList>
            <person name="Kao J.-S."/>
            <person name="Wu M."/>
        </authorList>
    </citation>
    <scope>NUCLEOTIDE SEQUENCE [GENOMIC DNA]</scope>
</reference>